<name>SYGB_SINMW</name>
<dbReference type="EC" id="6.1.1.14" evidence="1"/>
<dbReference type="EMBL" id="CP000738">
    <property type="protein sequence ID" value="ABR59323.1"/>
    <property type="molecule type" value="Genomic_DNA"/>
</dbReference>
<dbReference type="RefSeq" id="WP_011974669.1">
    <property type="nucleotide sequence ID" value="NC_009636.1"/>
</dbReference>
<dbReference type="RefSeq" id="YP_001326158.1">
    <property type="nucleotide sequence ID" value="NC_009636.1"/>
</dbReference>
<dbReference type="SMR" id="A6U6P3"/>
<dbReference type="STRING" id="366394.Smed_0466"/>
<dbReference type="GeneID" id="61609740"/>
<dbReference type="KEGG" id="smd:Smed_0466"/>
<dbReference type="PATRIC" id="fig|366394.8.peg.3551"/>
<dbReference type="eggNOG" id="COG0751">
    <property type="taxonomic scope" value="Bacteria"/>
</dbReference>
<dbReference type="HOGENOM" id="CLU_007220_2_1_5"/>
<dbReference type="OrthoDB" id="9775440at2"/>
<dbReference type="Proteomes" id="UP000001108">
    <property type="component" value="Chromosome"/>
</dbReference>
<dbReference type="GO" id="GO:0005829">
    <property type="term" value="C:cytosol"/>
    <property type="evidence" value="ECO:0007669"/>
    <property type="project" value="TreeGrafter"/>
</dbReference>
<dbReference type="GO" id="GO:0004814">
    <property type="term" value="F:arginine-tRNA ligase activity"/>
    <property type="evidence" value="ECO:0007669"/>
    <property type="project" value="InterPro"/>
</dbReference>
<dbReference type="GO" id="GO:0005524">
    <property type="term" value="F:ATP binding"/>
    <property type="evidence" value="ECO:0007669"/>
    <property type="project" value="UniProtKB-UniRule"/>
</dbReference>
<dbReference type="GO" id="GO:0004820">
    <property type="term" value="F:glycine-tRNA ligase activity"/>
    <property type="evidence" value="ECO:0007669"/>
    <property type="project" value="UniProtKB-UniRule"/>
</dbReference>
<dbReference type="GO" id="GO:0006420">
    <property type="term" value="P:arginyl-tRNA aminoacylation"/>
    <property type="evidence" value="ECO:0007669"/>
    <property type="project" value="InterPro"/>
</dbReference>
<dbReference type="GO" id="GO:0006426">
    <property type="term" value="P:glycyl-tRNA aminoacylation"/>
    <property type="evidence" value="ECO:0007669"/>
    <property type="project" value="UniProtKB-UniRule"/>
</dbReference>
<dbReference type="HAMAP" id="MF_00255">
    <property type="entry name" value="Gly_tRNA_synth_beta"/>
    <property type="match status" value="1"/>
</dbReference>
<dbReference type="InterPro" id="IPR008909">
    <property type="entry name" value="DALR_anticod-bd"/>
</dbReference>
<dbReference type="InterPro" id="IPR015944">
    <property type="entry name" value="Gly-tRNA-synth_bsu"/>
</dbReference>
<dbReference type="InterPro" id="IPR006194">
    <property type="entry name" value="Gly-tRNA-synth_heterodimer"/>
</dbReference>
<dbReference type="NCBIfam" id="TIGR00211">
    <property type="entry name" value="glyS"/>
    <property type="match status" value="1"/>
</dbReference>
<dbReference type="PANTHER" id="PTHR30075:SF2">
    <property type="entry name" value="GLYCINE--TRNA LIGASE, CHLOROPLASTIC_MITOCHONDRIAL 2"/>
    <property type="match status" value="1"/>
</dbReference>
<dbReference type="PANTHER" id="PTHR30075">
    <property type="entry name" value="GLYCYL-TRNA SYNTHETASE"/>
    <property type="match status" value="1"/>
</dbReference>
<dbReference type="Pfam" id="PF05746">
    <property type="entry name" value="DALR_1"/>
    <property type="match status" value="1"/>
</dbReference>
<dbReference type="Pfam" id="PF02092">
    <property type="entry name" value="tRNA_synt_2f"/>
    <property type="match status" value="1"/>
</dbReference>
<dbReference type="PRINTS" id="PR01045">
    <property type="entry name" value="TRNASYNTHGB"/>
</dbReference>
<dbReference type="SUPFAM" id="SSF109604">
    <property type="entry name" value="HD-domain/PDEase-like"/>
    <property type="match status" value="1"/>
</dbReference>
<dbReference type="PROSITE" id="PS50861">
    <property type="entry name" value="AA_TRNA_LIGASE_II_GLYAB"/>
    <property type="match status" value="1"/>
</dbReference>
<organism>
    <name type="scientific">Sinorhizobium medicae (strain WSM419)</name>
    <name type="common">Ensifer medicae</name>
    <dbReference type="NCBI Taxonomy" id="366394"/>
    <lineage>
        <taxon>Bacteria</taxon>
        <taxon>Pseudomonadati</taxon>
        <taxon>Pseudomonadota</taxon>
        <taxon>Alphaproteobacteria</taxon>
        <taxon>Hyphomicrobiales</taxon>
        <taxon>Rhizobiaceae</taxon>
        <taxon>Sinorhizobium/Ensifer group</taxon>
        <taxon>Sinorhizobium</taxon>
    </lineage>
</organism>
<comment type="catalytic activity">
    <reaction evidence="1">
        <text>tRNA(Gly) + glycine + ATP = glycyl-tRNA(Gly) + AMP + diphosphate</text>
        <dbReference type="Rhea" id="RHEA:16013"/>
        <dbReference type="Rhea" id="RHEA-COMP:9664"/>
        <dbReference type="Rhea" id="RHEA-COMP:9683"/>
        <dbReference type="ChEBI" id="CHEBI:30616"/>
        <dbReference type="ChEBI" id="CHEBI:33019"/>
        <dbReference type="ChEBI" id="CHEBI:57305"/>
        <dbReference type="ChEBI" id="CHEBI:78442"/>
        <dbReference type="ChEBI" id="CHEBI:78522"/>
        <dbReference type="ChEBI" id="CHEBI:456215"/>
        <dbReference type="EC" id="6.1.1.14"/>
    </reaction>
</comment>
<comment type="subunit">
    <text evidence="1">Tetramer of two alpha and two beta subunits.</text>
</comment>
<comment type="subcellular location">
    <subcellularLocation>
        <location evidence="1">Cytoplasm</location>
    </subcellularLocation>
</comment>
<comment type="similarity">
    <text evidence="1">Belongs to the class-II aminoacyl-tRNA synthetase family.</text>
</comment>
<proteinExistence type="inferred from homology"/>
<gene>
    <name evidence="1" type="primary">glyS</name>
    <name type="ordered locus">Smed_0466</name>
</gene>
<protein>
    <recommendedName>
        <fullName evidence="1">Glycine--tRNA ligase beta subunit</fullName>
        <ecNumber evidence="1">6.1.1.14</ecNumber>
    </recommendedName>
    <alternativeName>
        <fullName evidence="1">Glycyl-tRNA synthetase beta subunit</fullName>
        <shortName evidence="1">GlyRS</shortName>
    </alternativeName>
</protein>
<evidence type="ECO:0000255" key="1">
    <source>
        <dbReference type="HAMAP-Rule" id="MF_00255"/>
    </source>
</evidence>
<sequence length="721" mass="78696">MPDLLIELRSEEIPARMQRKAAGDLKKLVTDALVEAGLTYEGAREYWTPRRLTLDIRGLNARSADMREERKGPRIDANDKAIEGFLRAAGLSSISEAHVHNDPKKGDFYVAHIVRRGREAEEIVADVMPAIIRDFPWPKSMRSGAASAIPGSLRWVRPLQSIVCTFGAEHDETKVIPFEVDGIVASNITYGHRFHAPEAIAVRRFADYAEKLGKAKVVIDAERRKEIISADAHNIAFANGLELVEDEGLLEEVAGLVEWPKVLMGSFEESYLAIPSEIIRLTIKTNQKCFVTRKPGAETLSNRFILVSNIEAKDGGKEIVHGNGKVVRARLSDAAHFWKRDQGDLPDLETLAASAGKFGLDLKKPLDQRMAKLDALNVTFHAKLGTQGERVARIRSLAAALAKITGADPASVARAAVLAKADLRTEAVGEFPELQGIMGHKYAVLQGESAAVANAIEDHYKPQGPSDHVPTDPVSVSVALADKLDTLVGFWAIDERPTGSKDPYALRRAALGVIRLILEGRARLPLLPCFDVALASLKLQRPAMAADVSGDLLAFFHDRLKVYLRDLGARHDLIDAVLAPDADDLLMIARRVEALTAFITAEEGRNLLAGTKRATQILAAEEKKGTEVAASVDEELFRLDAERLLYASIKVASDGARAAIAKEDFRSAMEALSKLREPVDAFFNDVLVNDEDKAIRANRLALLGLIRSATGEVADFSKISG</sequence>
<keyword id="KW-0030">Aminoacyl-tRNA synthetase</keyword>
<keyword id="KW-0067">ATP-binding</keyword>
<keyword id="KW-0963">Cytoplasm</keyword>
<keyword id="KW-0436">Ligase</keyword>
<keyword id="KW-0547">Nucleotide-binding</keyword>
<keyword id="KW-0648">Protein biosynthesis</keyword>
<feature type="chain" id="PRO_1000101342" description="Glycine--tRNA ligase beta subunit">
    <location>
        <begin position="1"/>
        <end position="721"/>
    </location>
</feature>
<accession>A6U6P3</accession>
<reference key="1">
    <citation type="submission" date="2007-06" db="EMBL/GenBank/DDBJ databases">
        <title>Complete sequence of Sinorhizobium medicae WSM419 chromosome.</title>
        <authorList>
            <consortium name="US DOE Joint Genome Institute"/>
            <person name="Copeland A."/>
            <person name="Lucas S."/>
            <person name="Lapidus A."/>
            <person name="Barry K."/>
            <person name="Glavina del Rio T."/>
            <person name="Dalin E."/>
            <person name="Tice H."/>
            <person name="Pitluck S."/>
            <person name="Chain P."/>
            <person name="Malfatti S."/>
            <person name="Shin M."/>
            <person name="Vergez L."/>
            <person name="Schmutz J."/>
            <person name="Larimer F."/>
            <person name="Land M."/>
            <person name="Hauser L."/>
            <person name="Kyrpides N."/>
            <person name="Mikhailova N."/>
            <person name="Reeve W.G."/>
            <person name="Richardson P."/>
        </authorList>
    </citation>
    <scope>NUCLEOTIDE SEQUENCE [LARGE SCALE GENOMIC DNA]</scope>
    <source>
        <strain>WSM419</strain>
    </source>
</reference>